<name>RL9_SINMW</name>
<organism>
    <name type="scientific">Sinorhizobium medicae (strain WSM419)</name>
    <name type="common">Ensifer medicae</name>
    <dbReference type="NCBI Taxonomy" id="366394"/>
    <lineage>
        <taxon>Bacteria</taxon>
        <taxon>Pseudomonadati</taxon>
        <taxon>Pseudomonadota</taxon>
        <taxon>Alphaproteobacteria</taxon>
        <taxon>Hyphomicrobiales</taxon>
        <taxon>Rhizobiaceae</taxon>
        <taxon>Sinorhizobium/Ensifer group</taxon>
        <taxon>Sinorhizobium</taxon>
    </lineage>
</organism>
<feature type="chain" id="PRO_1000014866" description="Large ribosomal subunit protein bL9">
    <location>
        <begin position="1"/>
        <end position="191"/>
    </location>
</feature>
<feature type="region of interest" description="Disordered" evidence="2">
    <location>
        <begin position="151"/>
        <end position="191"/>
    </location>
</feature>
<keyword id="KW-0687">Ribonucleoprotein</keyword>
<keyword id="KW-0689">Ribosomal protein</keyword>
<keyword id="KW-0694">RNA-binding</keyword>
<keyword id="KW-0699">rRNA-binding</keyword>
<sequence length="191" mass="20935">MEVILLERIAKLGQMGETVKVRDGFARNYLLPLGKALRANASNKARFEAERSTLEARNLERKSEAQKVAESLDGKSFIIVRSAGETGQLYGSVAARDIVETLAAEGFNINRNQVDLNQPIKAIGLHTVTLHLHGEVDVAIEINVARSAEEAERQAKGESLTSADAIYGVDEDALKPEDFFNPEAEIESEEE</sequence>
<evidence type="ECO:0000255" key="1">
    <source>
        <dbReference type="HAMAP-Rule" id="MF_00503"/>
    </source>
</evidence>
<evidence type="ECO:0000256" key="2">
    <source>
        <dbReference type="SAM" id="MobiDB-lite"/>
    </source>
</evidence>
<evidence type="ECO:0000305" key="3"/>
<proteinExistence type="inferred from homology"/>
<reference key="1">
    <citation type="submission" date="2007-06" db="EMBL/GenBank/DDBJ databases">
        <title>Complete sequence of Sinorhizobium medicae WSM419 chromosome.</title>
        <authorList>
            <consortium name="US DOE Joint Genome Institute"/>
            <person name="Copeland A."/>
            <person name="Lucas S."/>
            <person name="Lapidus A."/>
            <person name="Barry K."/>
            <person name="Glavina del Rio T."/>
            <person name="Dalin E."/>
            <person name="Tice H."/>
            <person name="Pitluck S."/>
            <person name="Chain P."/>
            <person name="Malfatti S."/>
            <person name="Shin M."/>
            <person name="Vergez L."/>
            <person name="Schmutz J."/>
            <person name="Larimer F."/>
            <person name="Land M."/>
            <person name="Hauser L."/>
            <person name="Kyrpides N."/>
            <person name="Mikhailova N."/>
            <person name="Reeve W.G."/>
            <person name="Richardson P."/>
        </authorList>
    </citation>
    <scope>NUCLEOTIDE SEQUENCE [LARGE SCALE GENOMIC DNA]</scope>
    <source>
        <strain>WSM419</strain>
    </source>
</reference>
<dbReference type="EMBL" id="CP000738">
    <property type="protein sequence ID" value="ABR59594.1"/>
    <property type="molecule type" value="Genomic_DNA"/>
</dbReference>
<dbReference type="RefSeq" id="WP_011974938.1">
    <property type="nucleotide sequence ID" value="NC_009636.1"/>
</dbReference>
<dbReference type="RefSeq" id="YP_001326429.1">
    <property type="nucleotide sequence ID" value="NC_009636.1"/>
</dbReference>
<dbReference type="SMR" id="A6U7G4"/>
<dbReference type="STRING" id="366394.Smed_0738"/>
<dbReference type="GeneID" id="61610013"/>
<dbReference type="KEGG" id="smd:Smed_0738"/>
<dbReference type="PATRIC" id="fig|366394.8.peg.3843"/>
<dbReference type="eggNOG" id="COG0359">
    <property type="taxonomic scope" value="Bacteria"/>
</dbReference>
<dbReference type="HOGENOM" id="CLU_078938_1_0_5"/>
<dbReference type="OrthoDB" id="9788336at2"/>
<dbReference type="Proteomes" id="UP000001108">
    <property type="component" value="Chromosome"/>
</dbReference>
<dbReference type="GO" id="GO:1990904">
    <property type="term" value="C:ribonucleoprotein complex"/>
    <property type="evidence" value="ECO:0007669"/>
    <property type="project" value="UniProtKB-KW"/>
</dbReference>
<dbReference type="GO" id="GO:0005840">
    <property type="term" value="C:ribosome"/>
    <property type="evidence" value="ECO:0007669"/>
    <property type="project" value="UniProtKB-KW"/>
</dbReference>
<dbReference type="GO" id="GO:0019843">
    <property type="term" value="F:rRNA binding"/>
    <property type="evidence" value="ECO:0007669"/>
    <property type="project" value="UniProtKB-UniRule"/>
</dbReference>
<dbReference type="GO" id="GO:0003735">
    <property type="term" value="F:structural constituent of ribosome"/>
    <property type="evidence" value="ECO:0007669"/>
    <property type="project" value="InterPro"/>
</dbReference>
<dbReference type="GO" id="GO:0006412">
    <property type="term" value="P:translation"/>
    <property type="evidence" value="ECO:0007669"/>
    <property type="project" value="UniProtKB-UniRule"/>
</dbReference>
<dbReference type="Gene3D" id="3.10.430.100">
    <property type="entry name" value="Ribosomal protein L9, C-terminal domain"/>
    <property type="match status" value="1"/>
</dbReference>
<dbReference type="Gene3D" id="3.40.5.10">
    <property type="entry name" value="Ribosomal protein L9, N-terminal domain"/>
    <property type="match status" value="1"/>
</dbReference>
<dbReference type="HAMAP" id="MF_00503">
    <property type="entry name" value="Ribosomal_bL9"/>
    <property type="match status" value="1"/>
</dbReference>
<dbReference type="InterPro" id="IPR000244">
    <property type="entry name" value="Ribosomal_bL9"/>
</dbReference>
<dbReference type="InterPro" id="IPR009027">
    <property type="entry name" value="Ribosomal_bL9/RNase_H1_N"/>
</dbReference>
<dbReference type="InterPro" id="IPR020594">
    <property type="entry name" value="Ribosomal_bL9_bac/chp"/>
</dbReference>
<dbReference type="InterPro" id="IPR020069">
    <property type="entry name" value="Ribosomal_bL9_C"/>
</dbReference>
<dbReference type="InterPro" id="IPR036791">
    <property type="entry name" value="Ribosomal_bL9_C_sf"/>
</dbReference>
<dbReference type="InterPro" id="IPR020070">
    <property type="entry name" value="Ribosomal_bL9_N"/>
</dbReference>
<dbReference type="InterPro" id="IPR036935">
    <property type="entry name" value="Ribosomal_bL9_N_sf"/>
</dbReference>
<dbReference type="NCBIfam" id="TIGR00158">
    <property type="entry name" value="L9"/>
    <property type="match status" value="1"/>
</dbReference>
<dbReference type="PANTHER" id="PTHR21368">
    <property type="entry name" value="50S RIBOSOMAL PROTEIN L9"/>
    <property type="match status" value="1"/>
</dbReference>
<dbReference type="Pfam" id="PF03948">
    <property type="entry name" value="Ribosomal_L9_C"/>
    <property type="match status" value="1"/>
</dbReference>
<dbReference type="Pfam" id="PF01281">
    <property type="entry name" value="Ribosomal_L9_N"/>
    <property type="match status" value="1"/>
</dbReference>
<dbReference type="SUPFAM" id="SSF55658">
    <property type="entry name" value="L9 N-domain-like"/>
    <property type="match status" value="1"/>
</dbReference>
<dbReference type="SUPFAM" id="SSF55653">
    <property type="entry name" value="Ribosomal protein L9 C-domain"/>
    <property type="match status" value="1"/>
</dbReference>
<dbReference type="PROSITE" id="PS00651">
    <property type="entry name" value="RIBOSOMAL_L9"/>
    <property type="match status" value="1"/>
</dbReference>
<accession>A6U7G4</accession>
<gene>
    <name evidence="1" type="primary">rplI</name>
    <name type="ordered locus">Smed_0738</name>
</gene>
<comment type="function">
    <text evidence="1">Binds to the 23S rRNA.</text>
</comment>
<comment type="similarity">
    <text evidence="1">Belongs to the bacterial ribosomal protein bL9 family.</text>
</comment>
<protein>
    <recommendedName>
        <fullName evidence="1">Large ribosomal subunit protein bL9</fullName>
    </recommendedName>
    <alternativeName>
        <fullName evidence="3">50S ribosomal protein L9</fullName>
    </alternativeName>
</protein>